<feature type="chain" id="PRO_0000293229" description="Small ribosomal subunit protein uS4">
    <location>
        <begin position="1"/>
        <end position="208"/>
    </location>
</feature>
<feature type="domain" description="S4 RNA-binding" evidence="1">
    <location>
        <begin position="98"/>
        <end position="158"/>
    </location>
</feature>
<organism>
    <name type="scientific">Actinobacillus pleuropneumoniae serotype 5b (strain L20)</name>
    <dbReference type="NCBI Taxonomy" id="416269"/>
    <lineage>
        <taxon>Bacteria</taxon>
        <taxon>Pseudomonadati</taxon>
        <taxon>Pseudomonadota</taxon>
        <taxon>Gammaproteobacteria</taxon>
        <taxon>Pasteurellales</taxon>
        <taxon>Pasteurellaceae</taxon>
        <taxon>Actinobacillus</taxon>
    </lineage>
</organism>
<evidence type="ECO:0000255" key="1">
    <source>
        <dbReference type="HAMAP-Rule" id="MF_01306"/>
    </source>
</evidence>
<evidence type="ECO:0000305" key="2"/>
<dbReference type="EMBL" id="CP000569">
    <property type="protein sequence ID" value="ABN74867.1"/>
    <property type="molecule type" value="Genomic_DNA"/>
</dbReference>
<dbReference type="RefSeq" id="WP_005599325.1">
    <property type="nucleotide sequence ID" value="NC_009053.1"/>
</dbReference>
<dbReference type="SMR" id="A3N381"/>
<dbReference type="STRING" id="416269.APL_1783"/>
<dbReference type="EnsemblBacteria" id="ABN74867">
    <property type="protein sequence ID" value="ABN74867"/>
    <property type="gene ID" value="APL_1783"/>
</dbReference>
<dbReference type="GeneID" id="92743631"/>
<dbReference type="KEGG" id="apl:APL_1783"/>
<dbReference type="eggNOG" id="COG0522">
    <property type="taxonomic scope" value="Bacteria"/>
</dbReference>
<dbReference type="HOGENOM" id="CLU_092403_0_2_6"/>
<dbReference type="Proteomes" id="UP000001432">
    <property type="component" value="Chromosome"/>
</dbReference>
<dbReference type="GO" id="GO:0015935">
    <property type="term" value="C:small ribosomal subunit"/>
    <property type="evidence" value="ECO:0007669"/>
    <property type="project" value="InterPro"/>
</dbReference>
<dbReference type="GO" id="GO:0019843">
    <property type="term" value="F:rRNA binding"/>
    <property type="evidence" value="ECO:0007669"/>
    <property type="project" value="UniProtKB-UniRule"/>
</dbReference>
<dbReference type="GO" id="GO:0003735">
    <property type="term" value="F:structural constituent of ribosome"/>
    <property type="evidence" value="ECO:0007669"/>
    <property type="project" value="InterPro"/>
</dbReference>
<dbReference type="GO" id="GO:0042274">
    <property type="term" value="P:ribosomal small subunit biogenesis"/>
    <property type="evidence" value="ECO:0007669"/>
    <property type="project" value="TreeGrafter"/>
</dbReference>
<dbReference type="GO" id="GO:0006412">
    <property type="term" value="P:translation"/>
    <property type="evidence" value="ECO:0007669"/>
    <property type="project" value="UniProtKB-UniRule"/>
</dbReference>
<dbReference type="CDD" id="cd00165">
    <property type="entry name" value="S4"/>
    <property type="match status" value="1"/>
</dbReference>
<dbReference type="FunFam" id="1.10.1050.10:FF:000001">
    <property type="entry name" value="30S ribosomal protein S4"/>
    <property type="match status" value="1"/>
</dbReference>
<dbReference type="FunFam" id="3.10.290.10:FF:000001">
    <property type="entry name" value="30S ribosomal protein S4"/>
    <property type="match status" value="1"/>
</dbReference>
<dbReference type="Gene3D" id="1.10.1050.10">
    <property type="entry name" value="Ribosomal Protein S4 Delta 41, Chain A, domain 1"/>
    <property type="match status" value="1"/>
</dbReference>
<dbReference type="Gene3D" id="3.10.290.10">
    <property type="entry name" value="RNA-binding S4 domain"/>
    <property type="match status" value="1"/>
</dbReference>
<dbReference type="HAMAP" id="MF_01306_B">
    <property type="entry name" value="Ribosomal_uS4_B"/>
    <property type="match status" value="1"/>
</dbReference>
<dbReference type="InterPro" id="IPR022801">
    <property type="entry name" value="Ribosomal_uS4"/>
</dbReference>
<dbReference type="InterPro" id="IPR005709">
    <property type="entry name" value="Ribosomal_uS4_bac-type"/>
</dbReference>
<dbReference type="InterPro" id="IPR018079">
    <property type="entry name" value="Ribosomal_uS4_CS"/>
</dbReference>
<dbReference type="InterPro" id="IPR001912">
    <property type="entry name" value="Ribosomal_uS4_N"/>
</dbReference>
<dbReference type="InterPro" id="IPR002942">
    <property type="entry name" value="S4_RNA-bd"/>
</dbReference>
<dbReference type="InterPro" id="IPR036986">
    <property type="entry name" value="S4_RNA-bd_sf"/>
</dbReference>
<dbReference type="NCBIfam" id="NF003717">
    <property type="entry name" value="PRK05327.1"/>
    <property type="match status" value="1"/>
</dbReference>
<dbReference type="NCBIfam" id="TIGR01017">
    <property type="entry name" value="rpsD_bact"/>
    <property type="match status" value="1"/>
</dbReference>
<dbReference type="PANTHER" id="PTHR11831">
    <property type="entry name" value="30S 40S RIBOSOMAL PROTEIN"/>
    <property type="match status" value="1"/>
</dbReference>
<dbReference type="PANTHER" id="PTHR11831:SF4">
    <property type="entry name" value="SMALL RIBOSOMAL SUBUNIT PROTEIN US4M"/>
    <property type="match status" value="1"/>
</dbReference>
<dbReference type="Pfam" id="PF00163">
    <property type="entry name" value="Ribosomal_S4"/>
    <property type="match status" value="1"/>
</dbReference>
<dbReference type="Pfam" id="PF01479">
    <property type="entry name" value="S4"/>
    <property type="match status" value="1"/>
</dbReference>
<dbReference type="SMART" id="SM01390">
    <property type="entry name" value="Ribosomal_S4"/>
    <property type="match status" value="1"/>
</dbReference>
<dbReference type="SMART" id="SM00363">
    <property type="entry name" value="S4"/>
    <property type="match status" value="1"/>
</dbReference>
<dbReference type="SUPFAM" id="SSF55174">
    <property type="entry name" value="Alpha-L RNA-binding motif"/>
    <property type="match status" value="1"/>
</dbReference>
<dbReference type="PROSITE" id="PS00632">
    <property type="entry name" value="RIBOSOMAL_S4"/>
    <property type="match status" value="1"/>
</dbReference>
<dbReference type="PROSITE" id="PS50889">
    <property type="entry name" value="S4"/>
    <property type="match status" value="1"/>
</dbReference>
<name>RS4_ACTP2</name>
<reference key="1">
    <citation type="journal article" date="2008" name="J. Bacteriol.">
        <title>The complete genome sequence of Actinobacillus pleuropneumoniae L20 (serotype 5b).</title>
        <authorList>
            <person name="Foote S.J."/>
            <person name="Bosse J.T."/>
            <person name="Bouevitch A.B."/>
            <person name="Langford P.R."/>
            <person name="Young N.M."/>
            <person name="Nash J.H.E."/>
        </authorList>
    </citation>
    <scope>NUCLEOTIDE SEQUENCE [LARGE SCALE GENOMIC DNA]</scope>
    <source>
        <strain>L20</strain>
    </source>
</reference>
<sequence length="208" mass="23784">MARYLGPKLKLSRREGTDLFLKSGVRAIESKCRNRLDVAPGQHGARKPRLSDYGSQLREKQKVRRIYGILERQFRNYYTEANRLKGNTGENLLVLLEGRLDNVVYRMGFAATRAEARQLVSHKSIVVNGRVVNIPSYQVSVDDVVAVREKSKKQARIKASLELATQREKPTWLEVDATKMEGVFKRTPERSDLSADINEHLIVELYSK</sequence>
<comment type="function">
    <text evidence="1">One of the primary rRNA binding proteins, it binds directly to 16S rRNA where it nucleates assembly of the body of the 30S subunit.</text>
</comment>
<comment type="function">
    <text evidence="1">With S5 and S12 plays an important role in translational accuracy.</text>
</comment>
<comment type="subunit">
    <text evidence="1">Part of the 30S ribosomal subunit. Contacts protein S5. The interaction surface between S4 and S5 is involved in control of translational fidelity.</text>
</comment>
<comment type="similarity">
    <text evidence="1">Belongs to the universal ribosomal protein uS4 family.</text>
</comment>
<proteinExistence type="inferred from homology"/>
<accession>A3N381</accession>
<gene>
    <name evidence="1" type="primary">rpsD</name>
    <name type="ordered locus">APL_1783</name>
</gene>
<keyword id="KW-1185">Reference proteome</keyword>
<keyword id="KW-0687">Ribonucleoprotein</keyword>
<keyword id="KW-0689">Ribosomal protein</keyword>
<keyword id="KW-0694">RNA-binding</keyword>
<keyword id="KW-0699">rRNA-binding</keyword>
<protein>
    <recommendedName>
        <fullName evidence="1">Small ribosomal subunit protein uS4</fullName>
    </recommendedName>
    <alternativeName>
        <fullName evidence="2">30S ribosomal protein S4</fullName>
    </alternativeName>
</protein>